<feature type="chain" id="PRO_0000305576" description="Pantothenate synthetase">
    <location>
        <begin position="1"/>
        <end position="274"/>
    </location>
</feature>
<feature type="active site" description="Proton donor" evidence="1">
    <location>
        <position position="34"/>
    </location>
</feature>
<feature type="binding site" evidence="1">
    <location>
        <begin position="27"/>
        <end position="34"/>
    </location>
    <ligand>
        <name>ATP</name>
        <dbReference type="ChEBI" id="CHEBI:30616"/>
    </ligand>
</feature>
<feature type="binding site" evidence="1">
    <location>
        <position position="58"/>
    </location>
    <ligand>
        <name>(R)-pantoate</name>
        <dbReference type="ChEBI" id="CHEBI:15980"/>
    </ligand>
</feature>
<feature type="binding site" evidence="1">
    <location>
        <position position="58"/>
    </location>
    <ligand>
        <name>beta-alanine</name>
        <dbReference type="ChEBI" id="CHEBI:57966"/>
    </ligand>
</feature>
<feature type="binding site" evidence="1">
    <location>
        <begin position="145"/>
        <end position="148"/>
    </location>
    <ligand>
        <name>ATP</name>
        <dbReference type="ChEBI" id="CHEBI:30616"/>
    </ligand>
</feature>
<feature type="binding site" evidence="1">
    <location>
        <position position="151"/>
    </location>
    <ligand>
        <name>(R)-pantoate</name>
        <dbReference type="ChEBI" id="CHEBI:15980"/>
    </ligand>
</feature>
<feature type="binding site" evidence="1">
    <location>
        <begin position="182"/>
        <end position="185"/>
    </location>
    <ligand>
        <name>ATP</name>
        <dbReference type="ChEBI" id="CHEBI:30616"/>
    </ligand>
</feature>
<organism>
    <name type="scientific">Wolinella succinogenes (strain ATCC 29543 / DSM 1740 / CCUG 13145 / JCM 31913 / LMG 7466 / NCTC 11488 / FDC 602W)</name>
    <name type="common">Vibrio succinogenes</name>
    <dbReference type="NCBI Taxonomy" id="273121"/>
    <lineage>
        <taxon>Bacteria</taxon>
        <taxon>Pseudomonadati</taxon>
        <taxon>Campylobacterota</taxon>
        <taxon>Epsilonproteobacteria</taxon>
        <taxon>Campylobacterales</taxon>
        <taxon>Helicobacteraceae</taxon>
        <taxon>Wolinella</taxon>
    </lineage>
</organism>
<keyword id="KW-0067">ATP-binding</keyword>
<keyword id="KW-0963">Cytoplasm</keyword>
<keyword id="KW-0436">Ligase</keyword>
<keyword id="KW-0547">Nucleotide-binding</keyword>
<keyword id="KW-0566">Pantothenate biosynthesis</keyword>
<keyword id="KW-1185">Reference proteome</keyword>
<reference key="1">
    <citation type="journal article" date="2003" name="Proc. Natl. Acad. Sci. U.S.A.">
        <title>Complete genome sequence and analysis of Wolinella succinogenes.</title>
        <authorList>
            <person name="Baar C."/>
            <person name="Eppinger M."/>
            <person name="Raddatz G."/>
            <person name="Simon J."/>
            <person name="Lanz C."/>
            <person name="Klimmek O."/>
            <person name="Nandakumar R."/>
            <person name="Gross R."/>
            <person name="Rosinus A."/>
            <person name="Keller H."/>
            <person name="Jagtap P."/>
            <person name="Linke B."/>
            <person name="Meyer F."/>
            <person name="Lederer H."/>
            <person name="Schuster S.C."/>
        </authorList>
    </citation>
    <scope>NUCLEOTIDE SEQUENCE [LARGE SCALE GENOMIC DNA]</scope>
    <source>
        <strain>ATCC 29543 / DSM 1740 / CCUG 13145 / JCM 31913 / LMG 7466 / NCTC 11488 / FDC 602W</strain>
    </source>
</reference>
<comment type="function">
    <text evidence="1">Catalyzes the condensation of pantoate with beta-alanine in an ATP-dependent reaction via a pantoyl-adenylate intermediate.</text>
</comment>
<comment type="catalytic activity">
    <reaction evidence="1">
        <text>(R)-pantoate + beta-alanine + ATP = (R)-pantothenate + AMP + diphosphate + H(+)</text>
        <dbReference type="Rhea" id="RHEA:10912"/>
        <dbReference type="ChEBI" id="CHEBI:15378"/>
        <dbReference type="ChEBI" id="CHEBI:15980"/>
        <dbReference type="ChEBI" id="CHEBI:29032"/>
        <dbReference type="ChEBI" id="CHEBI:30616"/>
        <dbReference type="ChEBI" id="CHEBI:33019"/>
        <dbReference type="ChEBI" id="CHEBI:57966"/>
        <dbReference type="ChEBI" id="CHEBI:456215"/>
        <dbReference type="EC" id="6.3.2.1"/>
    </reaction>
</comment>
<comment type="pathway">
    <text evidence="1">Cofactor biosynthesis; (R)-pantothenate biosynthesis; (R)-pantothenate from (R)-pantoate and beta-alanine: step 1/1.</text>
</comment>
<comment type="subunit">
    <text evidence="1">Homodimer.</text>
</comment>
<comment type="subcellular location">
    <subcellularLocation>
        <location evidence="1">Cytoplasm</location>
    </subcellularLocation>
</comment>
<comment type="miscellaneous">
    <text evidence="1">The reaction proceeds by a bi uni uni bi ping pong mechanism.</text>
</comment>
<comment type="similarity">
    <text evidence="1">Belongs to the pantothenate synthetase family.</text>
</comment>
<gene>
    <name evidence="1" type="primary">panC</name>
    <name type="ordered locus">WS0112</name>
</gene>
<proteinExistence type="inferred from homology"/>
<dbReference type="EC" id="6.3.2.1" evidence="1"/>
<dbReference type="EMBL" id="BX571657">
    <property type="protein sequence ID" value="CAE09278.1"/>
    <property type="molecule type" value="Genomic_DNA"/>
</dbReference>
<dbReference type="RefSeq" id="WP_011138078.1">
    <property type="nucleotide sequence ID" value="NC_005090.1"/>
</dbReference>
<dbReference type="SMR" id="Q7MAP3"/>
<dbReference type="STRING" id="273121.WS0112"/>
<dbReference type="KEGG" id="wsu:WS0112"/>
<dbReference type="eggNOG" id="COG0414">
    <property type="taxonomic scope" value="Bacteria"/>
</dbReference>
<dbReference type="HOGENOM" id="CLU_047148_0_0_7"/>
<dbReference type="UniPathway" id="UPA00028">
    <property type="reaction ID" value="UER00005"/>
</dbReference>
<dbReference type="Proteomes" id="UP000000422">
    <property type="component" value="Chromosome"/>
</dbReference>
<dbReference type="GO" id="GO:0005829">
    <property type="term" value="C:cytosol"/>
    <property type="evidence" value="ECO:0007669"/>
    <property type="project" value="TreeGrafter"/>
</dbReference>
<dbReference type="GO" id="GO:0005524">
    <property type="term" value="F:ATP binding"/>
    <property type="evidence" value="ECO:0007669"/>
    <property type="project" value="UniProtKB-KW"/>
</dbReference>
<dbReference type="GO" id="GO:0004592">
    <property type="term" value="F:pantoate-beta-alanine ligase activity"/>
    <property type="evidence" value="ECO:0007669"/>
    <property type="project" value="UniProtKB-UniRule"/>
</dbReference>
<dbReference type="GO" id="GO:0015940">
    <property type="term" value="P:pantothenate biosynthetic process"/>
    <property type="evidence" value="ECO:0007669"/>
    <property type="project" value="UniProtKB-UniRule"/>
</dbReference>
<dbReference type="CDD" id="cd00560">
    <property type="entry name" value="PanC"/>
    <property type="match status" value="1"/>
</dbReference>
<dbReference type="Gene3D" id="3.40.50.620">
    <property type="entry name" value="HUPs"/>
    <property type="match status" value="1"/>
</dbReference>
<dbReference type="Gene3D" id="3.30.1300.10">
    <property type="entry name" value="Pantoate-beta-alanine ligase, C-terminal domain"/>
    <property type="match status" value="1"/>
</dbReference>
<dbReference type="HAMAP" id="MF_00158">
    <property type="entry name" value="PanC"/>
    <property type="match status" value="1"/>
</dbReference>
<dbReference type="InterPro" id="IPR004821">
    <property type="entry name" value="Cyt_trans-like"/>
</dbReference>
<dbReference type="InterPro" id="IPR003721">
    <property type="entry name" value="Pantoate_ligase"/>
</dbReference>
<dbReference type="InterPro" id="IPR042176">
    <property type="entry name" value="Pantoate_ligase_C"/>
</dbReference>
<dbReference type="InterPro" id="IPR014729">
    <property type="entry name" value="Rossmann-like_a/b/a_fold"/>
</dbReference>
<dbReference type="NCBIfam" id="TIGR00125">
    <property type="entry name" value="cyt_tran_rel"/>
    <property type="match status" value="1"/>
</dbReference>
<dbReference type="NCBIfam" id="TIGR00018">
    <property type="entry name" value="panC"/>
    <property type="match status" value="1"/>
</dbReference>
<dbReference type="PANTHER" id="PTHR21299">
    <property type="entry name" value="CYTIDYLATE KINASE/PANTOATE-BETA-ALANINE LIGASE"/>
    <property type="match status" value="1"/>
</dbReference>
<dbReference type="PANTHER" id="PTHR21299:SF1">
    <property type="entry name" value="PANTOATE--BETA-ALANINE LIGASE"/>
    <property type="match status" value="1"/>
</dbReference>
<dbReference type="Pfam" id="PF02569">
    <property type="entry name" value="Pantoate_ligase"/>
    <property type="match status" value="1"/>
</dbReference>
<dbReference type="SUPFAM" id="SSF52374">
    <property type="entry name" value="Nucleotidylyl transferase"/>
    <property type="match status" value="1"/>
</dbReference>
<sequence>MQIVTSPSELRALRREWKGTVGFVPTMGALHKGHLTLIQKSKAQNEKSIVSIFVNPTQFGENEDFAHYPRKPEADANICQKAGVDILFMPKAEDIYFEGDEVLLKAPQKSGFVLEGAARPGHFDGVLRVVLKLLHLTSPTRAYFGQKDTQQLLLIQKMARELFLPYEIVPCPTERDSDGLALSSRNAYLSEAEKKEALKISASLKEATKHIMTGELQSSQIKERALKVLEGVEVEYFEIVDRNLMPLERIIKGETIILVTARVGKVRLLDNLWI</sequence>
<accession>Q7MAP3</accession>
<evidence type="ECO:0000255" key="1">
    <source>
        <dbReference type="HAMAP-Rule" id="MF_00158"/>
    </source>
</evidence>
<name>PANC_WOLSU</name>
<protein>
    <recommendedName>
        <fullName evidence="1">Pantothenate synthetase</fullName>
        <shortName evidence="1">PS</shortName>
        <ecNumber evidence="1">6.3.2.1</ecNumber>
    </recommendedName>
    <alternativeName>
        <fullName evidence="1">Pantoate--beta-alanine ligase</fullName>
    </alternativeName>
    <alternativeName>
        <fullName evidence="1">Pantoate-activating enzyme</fullName>
    </alternativeName>
</protein>